<accession>P0C0V0</accession>
<accession>P09376</accession>
<accession>P15724</accession>
<gene>
    <name type="primary">degP</name>
    <name type="synonym">htrA</name>
    <name type="synonym">ptd</name>
    <name type="ordered locus">b0161</name>
    <name type="ordered locus">JW0157</name>
</gene>
<sequence length="474" mass="49354">MKKTTLALSALALSLGLALSPLSATAAETSSATTAQQMPSLAPMLEKVMPSVVSINVEGSTTVNTPRMPRNFQQFFGDDSPFCQEGSPFQSSPFCQGGQGGNGGGQQQKFMALGSGVIIDADKGYVVTNNHVVDNATVIKVQLSDGRKFDAKMVGKDPRSDIALIQIQNPKNLTAIKMADSDALRVGDYTVAIGNPFGLGETVTSGIVSALGRSGLNAENYENFIQTDAAINRGNSGGALVNLNGELIGINTAILAPDGGNIGIGFAIPSNMVKNLTSQMVEYGQVKRGELGIMGTELNSELAKAMKVDAQRGAFVSQVLPNSSAAKAGIKAGDVITSLNGKPISSFAALRAQVGTMPVGSKLTLGLLRDGKQVNVNLELQQSSQNQVDSSSIFNGIEGAEMSNKGKDQGVVVNNVKTGTPAAQIGLKKGDVIIGANQQAVKNIAELRKVLDSKPSVLALNIQRGDSTIYLLMQ</sequence>
<organism>
    <name type="scientific">Escherichia coli (strain K12)</name>
    <dbReference type="NCBI Taxonomy" id="83333"/>
    <lineage>
        <taxon>Bacteria</taxon>
        <taxon>Pseudomonadati</taxon>
        <taxon>Pseudomonadota</taxon>
        <taxon>Gammaproteobacteria</taxon>
        <taxon>Enterobacterales</taxon>
        <taxon>Enterobacteriaceae</taxon>
        <taxon>Escherichia</taxon>
    </lineage>
</organism>
<proteinExistence type="evidence at protein level"/>
<evidence type="ECO:0000255" key="1">
    <source>
        <dbReference type="PROSITE-ProRule" id="PRU00143"/>
    </source>
</evidence>
<evidence type="ECO:0000269" key="2">
    <source>
    </source>
</evidence>
<evidence type="ECO:0000269" key="3">
    <source>
    </source>
</evidence>
<evidence type="ECO:0000269" key="4">
    <source>
    </source>
</evidence>
<evidence type="ECO:0000269" key="5">
    <source>
    </source>
</evidence>
<evidence type="ECO:0000269" key="6">
    <source>
    </source>
</evidence>
<evidence type="ECO:0000269" key="7">
    <source>
    </source>
</evidence>
<evidence type="ECO:0000269" key="8">
    <source>
    </source>
</evidence>
<evidence type="ECO:0000269" key="9">
    <source>
    </source>
</evidence>
<evidence type="ECO:0000269" key="10">
    <source>
    </source>
</evidence>
<evidence type="ECO:0000269" key="11">
    <source>
    </source>
</evidence>
<evidence type="ECO:0000269" key="12">
    <source>
    </source>
</evidence>
<evidence type="ECO:0000269" key="13">
    <source>
    </source>
</evidence>
<evidence type="ECO:0000269" key="14">
    <source>
    </source>
</evidence>
<evidence type="ECO:0000269" key="15">
    <source>
    </source>
</evidence>
<evidence type="ECO:0000269" key="16">
    <source>
    </source>
</evidence>
<evidence type="ECO:0000269" key="17">
    <source>
    </source>
</evidence>
<evidence type="ECO:0000269" key="18">
    <source>
    </source>
</evidence>
<evidence type="ECO:0000269" key="19">
    <source>
    </source>
</evidence>
<evidence type="ECO:0000269" key="20">
    <source>
    </source>
</evidence>
<evidence type="ECO:0000269" key="21">
    <source>
    </source>
</evidence>
<evidence type="ECO:0000269" key="22">
    <source>
    </source>
</evidence>
<evidence type="ECO:0000269" key="23">
    <source>
    </source>
</evidence>
<evidence type="ECO:0000269" key="24">
    <source>
    </source>
</evidence>
<evidence type="ECO:0000305" key="25"/>
<evidence type="ECO:0007829" key="26">
    <source>
        <dbReference type="PDB" id="1KY9"/>
    </source>
</evidence>
<evidence type="ECO:0007829" key="27">
    <source>
        <dbReference type="PDB" id="3MH5"/>
    </source>
</evidence>
<evidence type="ECO:0007829" key="28">
    <source>
        <dbReference type="PDB" id="3MH7"/>
    </source>
</evidence>
<evidence type="ECO:0007829" key="29">
    <source>
        <dbReference type="PDB" id="3OU0"/>
    </source>
</evidence>
<evidence type="ECO:0007829" key="30">
    <source>
        <dbReference type="PDB" id="8F0A"/>
    </source>
</evidence>
<keyword id="KW-0002">3D-structure</keyword>
<keyword id="KW-0997">Cell inner membrane</keyword>
<keyword id="KW-1003">Cell membrane</keyword>
<keyword id="KW-0903">Direct protein sequencing</keyword>
<keyword id="KW-1015">Disulfide bond</keyword>
<keyword id="KW-0378">Hydrolase</keyword>
<keyword id="KW-0472">Membrane</keyword>
<keyword id="KW-0645">Protease</keyword>
<keyword id="KW-1185">Reference proteome</keyword>
<keyword id="KW-0677">Repeat</keyword>
<keyword id="KW-0720">Serine protease</keyword>
<keyword id="KW-0732">Signal</keyword>
<keyword id="KW-0346">Stress response</keyword>
<name>DEGP_ECOLI</name>
<comment type="function">
    <text evidence="2 4 7 8 9 16 18 21">DegP acts as a chaperone at low temperatures but switches to a peptidase (heat shock protein) at higher temperatures (PubMed:10319814). Degrades transiently denatured and unfolded or misfolded proteins which accumulate in the periplasm following heat shock or other stress conditions (PubMed:16303867). DegP is efficient with Val-Xaa and Ile-Xaa peptide bonds, suggesting a preference for beta-branched side chain amino acids (PubMed:8830688). Only unfolded proteins devoid of disulfide bonds appear capable of being cleaved, thereby preventing non-specific proteolysis of folded proteins (PubMed:8830688). Its proteolytic activity is essential for the survival of cells at elevated temperatures (PubMed:7557477). It can degrade IciA, Ada, casein, globin and PapA. DegP shares specificity with DegQ (PubMed:8830688). DegP is also involved in the biogenesis of partially folded outer-membrane proteins (OMP).</text>
</comment>
<comment type="catalytic activity">
    <reaction evidence="21">
        <text>Acts on substrates that are at least partially unfolded. The cleavage site P1 residue is normally between a pair of hydrophobic residues, such as Val-|-Val.</text>
        <dbReference type="EC" id="3.4.21.107"/>
    </reaction>
</comment>
<comment type="activity regulation">
    <text evidence="16">Inhibited by diisopropylfluorophosphate (DFP).</text>
</comment>
<comment type="biophysicochemical properties">
    <temperatureDependence>
        <text evidence="19">Optimum temperature is around 55 degrees Celsius. In the range from 37 to 55 degrees Celsius, the proteolytic activity rapidly increases with temperature.</text>
    </temperatureDependence>
</comment>
<comment type="subunit">
    <text evidence="3 8 10 13 14 15 21">DegP can reversibly switch between different oligomeric forms that represent inactive (6-mer) and active (12- and 24-mer) protease states. Substrate binding triggers the conversion of the resting DegP trimer and hexamer into catalytically active 12- and 24-mers. The conversion of 6-mer (DegP6) into 12-mer (DegP12) or 24-mer (DegP24) is crucial in regulating protease activity.</text>
</comment>
<comment type="interaction">
    <interactant intactId="EBI-547165">
        <id>P0C0V0</id>
    </interactant>
    <interactant intactId="EBI-547165">
        <id>P0C0V0</id>
        <label>degP</label>
    </interactant>
    <organismsDiffer>false</organismsDiffer>
    <experiments>16</experiments>
</comment>
<comment type="interaction">
    <interactant intactId="EBI-547165">
        <id>P0C0V0</id>
    </interactant>
    <interactant intactId="EBI-371347">
        <id>P0A910</id>
        <label>ompA</label>
    </interactant>
    <organismsDiffer>false</organismsDiffer>
    <experiments>8</experiments>
</comment>
<comment type="interaction">
    <interactant intactId="EBI-547165">
        <id>P0C0V0</id>
    </interactant>
    <interactant intactId="EBI-371155">
        <id>P06996</id>
        <label>ompC</label>
    </interactant>
    <organismsDiffer>false</organismsDiffer>
    <experiments>7</experiments>
</comment>
<comment type="interaction">
    <interactant intactId="EBI-547165">
        <id>P0C0V0</id>
    </interactant>
    <interactant intactId="EBI-5260183">
        <id>P02666</id>
        <label>CSN2</label>
    </interactant>
    <organismsDiffer>true</organismsDiffer>
    <experiments>9</experiments>
</comment>
<comment type="interaction">
    <interactant intactId="EBI-547165">
        <id>P0C0V0</id>
    </interactant>
    <interactant intactId="EBI-1029543">
        <id>P00698</id>
        <label>LYZ</label>
    </interactant>
    <organismsDiffer>true</organismsDiffer>
    <experiments>11</experiments>
</comment>
<comment type="subcellular location">
    <subcellularLocation>
        <location evidence="22">Cell inner membrane</location>
        <topology evidence="22">Peripheral membrane protein</topology>
        <orientation evidence="22">Cytoplasmic side</orientation>
    </subcellularLocation>
</comment>
<comment type="induction">
    <text evidence="17 20 23">By heat shock (PubMed:3057437). Transcriptionally up-regulated by sigma-E factor and the Cpx two-component signal transduction pathway (PubMed:7883164, PubMed:9351822).</text>
</comment>
<comment type="disruption phenotype">
    <text evidence="6 7 11">Decreased induction of Cpx two-component regulatory system (PubMed:16166523). Increased accumulation of periplasmic accessory protein CpxP, increased accumulation and toxicity of overexpressed, misfolded periplasmic proteins (PubMed:16303867). Increased resistance to hydroxyurea, probably due to decreased degradation of misfolded proteins which eventually leads to decreased OH radical formation (PubMed:20005847).</text>
</comment>
<comment type="miscellaneous">
    <text>DegP is indispensable for bacterial survival at temperatures above 42 degrees Celsius, however is also able to digest its natural substrates in a reducing environment at temperatures as low as 20 degrees Celsius.</text>
</comment>
<comment type="similarity">
    <text evidence="25">Belongs to the peptidase S1C family.</text>
</comment>
<feature type="signal peptide" evidence="16 24">
    <location>
        <begin position="1"/>
        <end position="26"/>
    </location>
</feature>
<feature type="chain" id="PRO_0000026921" description="Periplasmic serine endoprotease DegP">
    <location>
        <begin position="27"/>
        <end position="474"/>
    </location>
</feature>
<feature type="domain" description="PDZ 1" evidence="1">
    <location>
        <begin position="280"/>
        <end position="371"/>
    </location>
</feature>
<feature type="domain" description="PDZ 2" evidence="1">
    <location>
        <begin position="377"/>
        <end position="466"/>
    </location>
</feature>
<feature type="active site" description="Charge relay system" evidence="13">
    <location>
        <position position="131"/>
    </location>
</feature>
<feature type="active site" description="Charge relay system" evidence="13">
    <location>
        <position position="161"/>
    </location>
</feature>
<feature type="active site" description="Charge relay system" evidence="13">
    <location>
        <position position="236"/>
    </location>
</feature>
<feature type="binding site">
    <location>
        <position position="58"/>
    </location>
    <ligand>
        <name>substrate</name>
    </ligand>
</feature>
<feature type="binding site">
    <location>
        <position position="131"/>
    </location>
    <ligand>
        <name>substrate</name>
    </ligand>
</feature>
<feature type="binding site">
    <location>
        <position position="161"/>
    </location>
    <ligand>
        <name>substrate</name>
    </ligand>
</feature>
<feature type="binding site">
    <location>
        <begin position="234"/>
        <end position="236"/>
    </location>
    <ligand>
        <name>substrate</name>
    </ligand>
</feature>
<feature type="binding site">
    <location>
        <begin position="252"/>
        <end position="256"/>
    </location>
    <ligand>
        <name>substrate</name>
    </ligand>
</feature>
<feature type="binding site">
    <location>
        <begin position="291"/>
        <end position="295"/>
    </location>
    <ligand>
        <name>substrate</name>
    </ligand>
</feature>
<feature type="disulfide bond" evidence="5">
    <location>
        <begin position="83"/>
        <end position="95"/>
    </location>
</feature>
<feature type="mutagenesis site" description="Loss of peptidase activity with no detectable changes in secondary structure." evidence="18">
    <original>H</original>
    <variation>R</variation>
    <location>
        <position position="131"/>
    </location>
</feature>
<feature type="mutagenesis site" description="Loss of peptidase activity with no detectable changes in secondary structure." evidence="4 18">
    <original>S</original>
    <variation>A</variation>
    <location>
        <position position="236"/>
    </location>
</feature>
<feature type="mutagenesis site" description="It does not affect the proteolytic activity." evidence="12">
    <original>I</original>
    <variation>N</variation>
    <location>
        <position position="254"/>
    </location>
</feature>
<feature type="mutagenesis site" description="Loss of proteolytic activity." evidence="12">
    <original>L</original>
    <variation>N</variation>
    <location>
        <position position="255"/>
    </location>
</feature>
<feature type="mutagenesis site" description="Increases the proteolytic activity." evidence="12">
    <original>D</original>
    <variation>V</variation>
    <location>
        <position position="258"/>
    </location>
</feature>
<feature type="mutagenesis site" description="Loss of proteolytic activity." evidence="12">
    <original>N</original>
    <variation>I</variation>
    <location>
        <position position="261"/>
    </location>
</feature>
<feature type="mutagenesis site" description="Stimulates the proteolytic activity at low temperatures (20-30 degrees Celsius), whereas at higher temperatures (above 35 degrees Celsius), the proteolytic activity is less efficient." evidence="12">
    <original>I</original>
    <variation>N</variation>
    <location>
        <position position="262"/>
    </location>
</feature>
<feature type="mutagenesis site" description="Loss of proteolytic activity." evidence="12">
    <original>I</original>
    <variation>N</variation>
    <location>
        <position position="264"/>
    </location>
</feature>
<feature type="sequence conflict" description="In Ref. 1; AAA23994 and 7; AAA23680." evidence="25" ref="1 7">
    <original>A</original>
    <variation>R</variation>
    <location>
        <position position="10"/>
    </location>
</feature>
<feature type="sequence conflict" description="In Ref. 6; AAA23717." evidence="25" ref="6">
    <original>E</original>
    <variation>Q</variation>
    <location>
        <position position="46"/>
    </location>
</feature>
<feature type="sequence conflict" description="In Ref. 1; AAA23994/CAA30997." evidence="25" ref="1">
    <original>A</original>
    <variation>G</variation>
    <location>
        <position position="192"/>
    </location>
</feature>
<feature type="sequence conflict" description="In Ref. 1; AAA23994/CAA30997." evidence="25" ref="1">
    <original>STIYLLMQ</original>
    <variation>RHLPVNAVISLNPFLKTGRGSPYNL</variation>
    <location>
        <begin position="467"/>
        <end position="474"/>
    </location>
</feature>
<feature type="helix" evidence="30">
    <location>
        <begin position="42"/>
        <end position="45"/>
    </location>
</feature>
<feature type="turn" evidence="30">
    <location>
        <begin position="46"/>
        <end position="48"/>
    </location>
</feature>
<feature type="helix" evidence="30">
    <location>
        <begin position="49"/>
        <end position="51"/>
    </location>
</feature>
<feature type="strand" evidence="30">
    <location>
        <begin position="52"/>
        <end position="60"/>
    </location>
</feature>
<feature type="strand" evidence="27">
    <location>
        <begin position="106"/>
        <end position="108"/>
    </location>
</feature>
<feature type="strand" evidence="30">
    <location>
        <begin position="109"/>
        <end position="120"/>
    </location>
</feature>
<feature type="turn" evidence="30">
    <location>
        <begin position="121"/>
        <end position="124"/>
    </location>
</feature>
<feature type="strand" evidence="30">
    <location>
        <begin position="125"/>
        <end position="129"/>
    </location>
</feature>
<feature type="helix" evidence="30">
    <location>
        <begin position="130"/>
        <end position="133"/>
    </location>
</feature>
<feature type="strand" evidence="30">
    <location>
        <begin position="136"/>
        <end position="142"/>
    </location>
</feature>
<feature type="strand" evidence="30">
    <location>
        <begin position="148"/>
        <end position="156"/>
    </location>
</feature>
<feature type="turn" evidence="30">
    <location>
        <begin position="158"/>
        <end position="160"/>
    </location>
</feature>
<feature type="strand" evidence="30">
    <location>
        <begin position="162"/>
        <end position="169"/>
    </location>
</feature>
<feature type="helix" evidence="30">
    <location>
        <begin position="181"/>
        <end position="183"/>
    </location>
</feature>
<feature type="strand" evidence="30">
    <location>
        <begin position="188"/>
        <end position="194"/>
    </location>
</feature>
<feature type="helix" evidence="30">
    <location>
        <begin position="196"/>
        <end position="198"/>
    </location>
</feature>
<feature type="strand" evidence="30">
    <location>
        <begin position="202"/>
        <end position="213"/>
    </location>
</feature>
<feature type="turn" evidence="28">
    <location>
        <begin position="216"/>
        <end position="219"/>
    </location>
</feature>
<feature type="strand" evidence="30">
    <location>
        <begin position="224"/>
        <end position="227"/>
    </location>
</feature>
<feature type="strand" evidence="30">
    <location>
        <begin position="239"/>
        <end position="241"/>
    </location>
</feature>
<feature type="strand" evidence="30">
    <location>
        <begin position="247"/>
        <end position="255"/>
    </location>
</feature>
<feature type="helix" evidence="28">
    <location>
        <begin position="257"/>
        <end position="259"/>
    </location>
</feature>
<feature type="strand" evidence="30">
    <location>
        <begin position="265"/>
        <end position="269"/>
    </location>
</feature>
<feature type="helix" evidence="30">
    <location>
        <begin position="270"/>
        <end position="283"/>
    </location>
</feature>
<feature type="strand" evidence="30">
    <location>
        <begin position="293"/>
        <end position="297"/>
    </location>
</feature>
<feature type="helix" evidence="30">
    <location>
        <begin position="300"/>
        <end position="305"/>
    </location>
</feature>
<feature type="strand" evidence="30">
    <location>
        <begin position="311"/>
        <end position="319"/>
    </location>
</feature>
<feature type="helix" evidence="30">
    <location>
        <begin position="324"/>
        <end position="328"/>
    </location>
</feature>
<feature type="strand" evidence="30">
    <location>
        <begin position="335"/>
        <end position="339"/>
    </location>
</feature>
<feature type="helix" evidence="30">
    <location>
        <begin position="347"/>
        <end position="354"/>
    </location>
</feature>
<feature type="strand" evidence="26">
    <location>
        <begin position="356"/>
        <end position="358"/>
    </location>
</feature>
<feature type="strand" evidence="30">
    <location>
        <begin position="362"/>
        <end position="369"/>
    </location>
</feature>
<feature type="strand" evidence="30">
    <location>
        <begin position="372"/>
        <end position="379"/>
    </location>
</feature>
<feature type="strand" evidence="26">
    <location>
        <begin position="382"/>
        <end position="384"/>
    </location>
</feature>
<feature type="strand" evidence="26">
    <location>
        <begin position="388"/>
        <end position="393"/>
    </location>
</feature>
<feature type="strand" evidence="30">
    <location>
        <begin position="401"/>
        <end position="404"/>
    </location>
</feature>
<feature type="turn" evidence="30">
    <location>
        <begin position="406"/>
        <end position="408"/>
    </location>
</feature>
<feature type="strand" evidence="30">
    <location>
        <begin position="411"/>
        <end position="415"/>
    </location>
</feature>
<feature type="strand" evidence="29">
    <location>
        <begin position="418"/>
        <end position="420"/>
    </location>
</feature>
<feature type="helix" evidence="30">
    <location>
        <begin position="421"/>
        <end position="424"/>
    </location>
</feature>
<feature type="strand" evidence="30">
    <location>
        <begin position="432"/>
        <end position="436"/>
    </location>
</feature>
<feature type="helix" evidence="30">
    <location>
        <begin position="444"/>
        <end position="451"/>
    </location>
</feature>
<feature type="strand" evidence="30">
    <location>
        <begin position="456"/>
        <end position="464"/>
    </location>
</feature>
<feature type="strand" evidence="30">
    <location>
        <begin position="467"/>
        <end position="473"/>
    </location>
</feature>
<dbReference type="EC" id="3.4.21.107" evidence="21"/>
<dbReference type="EMBL" id="M36536">
    <property type="protein sequence ID" value="AAA23994.1"/>
    <property type="molecule type" value="Genomic_DNA"/>
</dbReference>
<dbReference type="EMBL" id="X12457">
    <property type="protein sequence ID" value="CAA30997.1"/>
    <property type="molecule type" value="Genomic_DNA"/>
</dbReference>
<dbReference type="EMBL" id="U70214">
    <property type="protein sequence ID" value="AAB08591.1"/>
    <property type="molecule type" value="Genomic_DNA"/>
</dbReference>
<dbReference type="EMBL" id="U00096">
    <property type="protein sequence ID" value="AAC73272.1"/>
    <property type="molecule type" value="Genomic_DNA"/>
</dbReference>
<dbReference type="EMBL" id="AP009048">
    <property type="protein sequence ID" value="BAB96738.1"/>
    <property type="molecule type" value="Genomic_DNA"/>
</dbReference>
<dbReference type="EMBL" id="M29955">
    <property type="protein sequence ID" value="AAA23717.1"/>
    <property type="molecule type" value="Genomic_DNA"/>
</dbReference>
<dbReference type="EMBL" id="M31772">
    <property type="protein sequence ID" value="AAA23680.1"/>
    <property type="molecule type" value="Genomic_DNA"/>
</dbReference>
<dbReference type="PIR" id="S45229">
    <property type="entry name" value="S45229"/>
</dbReference>
<dbReference type="RefSeq" id="NP_414703.1">
    <property type="nucleotide sequence ID" value="NC_000913.3"/>
</dbReference>
<dbReference type="RefSeq" id="WP_000753946.1">
    <property type="nucleotide sequence ID" value="NZ_SSZK01000004.1"/>
</dbReference>
<dbReference type="PDB" id="1KY9">
    <property type="method" value="X-ray"/>
    <property type="resolution" value="2.80 A"/>
    <property type="chains" value="A/B=27-474"/>
</dbReference>
<dbReference type="PDB" id="2ZLE">
    <property type="method" value="EM"/>
    <property type="resolution" value="28.00 A"/>
    <property type="chains" value="A/B/C/E/F/G/H/I/J/K/L/M=27-474"/>
</dbReference>
<dbReference type="PDB" id="3CS0">
    <property type="method" value="X-ray"/>
    <property type="resolution" value="3.00 A"/>
    <property type="chains" value="A=27-474"/>
</dbReference>
<dbReference type="PDB" id="3MH4">
    <property type="method" value="X-ray"/>
    <property type="resolution" value="3.10 A"/>
    <property type="chains" value="A/B=27-474"/>
</dbReference>
<dbReference type="PDB" id="3MH5">
    <property type="method" value="X-ray"/>
    <property type="resolution" value="3.00 A"/>
    <property type="chains" value="A/B=27-474"/>
</dbReference>
<dbReference type="PDB" id="3MH6">
    <property type="method" value="X-ray"/>
    <property type="resolution" value="3.60 A"/>
    <property type="chains" value="A=27-474"/>
</dbReference>
<dbReference type="PDB" id="3MH7">
    <property type="method" value="X-ray"/>
    <property type="resolution" value="2.96 A"/>
    <property type="chains" value="A=27-474"/>
</dbReference>
<dbReference type="PDB" id="3OTP">
    <property type="method" value="X-ray"/>
    <property type="resolution" value="3.76 A"/>
    <property type="chains" value="A/B/C/D/E/F=27-474"/>
</dbReference>
<dbReference type="PDB" id="3OU0">
    <property type="method" value="X-ray"/>
    <property type="resolution" value="3.00 A"/>
    <property type="chains" value="A=27-474"/>
</dbReference>
<dbReference type="PDB" id="4A8D">
    <property type="method" value="EM"/>
    <property type="resolution" value="28.00 A"/>
    <property type="chains" value="A/B/C/D/E/F/G/H/I/J/K/L=27-474"/>
</dbReference>
<dbReference type="PDB" id="6JJK">
    <property type="method" value="X-ray"/>
    <property type="resolution" value="3.60 A"/>
    <property type="chains" value="A/B/C/D/E/F=35-474"/>
</dbReference>
<dbReference type="PDB" id="6JJL">
    <property type="method" value="X-ray"/>
    <property type="resolution" value="4.20 A"/>
    <property type="chains" value="A/B/C/D/E/F=35-474"/>
</dbReference>
<dbReference type="PDB" id="6JJO">
    <property type="method" value="X-ray"/>
    <property type="resolution" value="4.16 A"/>
    <property type="chains" value="A/B/C/D/E/F=27-474"/>
</dbReference>
<dbReference type="PDB" id="8F0A">
    <property type="method" value="EM"/>
    <property type="resolution" value="2.60 A"/>
    <property type="chains" value="A/B/C=38-385, D/E/F=400-474"/>
</dbReference>
<dbReference type="PDB" id="8F0U">
    <property type="method" value="EM"/>
    <property type="resolution" value="3.10 A"/>
    <property type="chains" value="A=38-385, D=400-474"/>
</dbReference>
<dbReference type="PDB" id="8F1T">
    <property type="method" value="EM"/>
    <property type="resolution" value="12.10 A"/>
    <property type="chains" value="A/B/C=38-385, D/E/F=400-474"/>
</dbReference>
<dbReference type="PDB" id="8F1U">
    <property type="method" value="EM"/>
    <property type="resolution" value="13.80 A"/>
    <property type="chains" value="A/B/C=38-385, D/E/F=400-474"/>
</dbReference>
<dbReference type="PDB" id="8F21">
    <property type="method" value="EM"/>
    <property type="resolution" value="14.10 A"/>
    <property type="chains" value="A/B/C=38-385, D/E/F=400-474"/>
</dbReference>
<dbReference type="PDB" id="8F26">
    <property type="method" value="EM"/>
    <property type="resolution" value="9.70 A"/>
    <property type="chains" value="A=38-385, D=400-474"/>
</dbReference>
<dbReference type="PDBsum" id="1KY9"/>
<dbReference type="PDBsum" id="2ZLE"/>
<dbReference type="PDBsum" id="3CS0"/>
<dbReference type="PDBsum" id="3MH4"/>
<dbReference type="PDBsum" id="3MH5"/>
<dbReference type="PDBsum" id="3MH6"/>
<dbReference type="PDBsum" id="3MH7"/>
<dbReference type="PDBsum" id="3OTP"/>
<dbReference type="PDBsum" id="3OU0"/>
<dbReference type="PDBsum" id="4A8D"/>
<dbReference type="PDBsum" id="6JJK"/>
<dbReference type="PDBsum" id="6JJL"/>
<dbReference type="PDBsum" id="6JJO"/>
<dbReference type="PDBsum" id="8F0A"/>
<dbReference type="PDBsum" id="8F0U"/>
<dbReference type="PDBsum" id="8F1T"/>
<dbReference type="PDBsum" id="8F1U"/>
<dbReference type="PDBsum" id="8F21"/>
<dbReference type="PDBsum" id="8F26"/>
<dbReference type="EMDB" id="EMD-1505"/>
<dbReference type="EMDB" id="EMD-28754"/>
<dbReference type="EMDB" id="EMD-28781"/>
<dbReference type="EMDB" id="EMD-28800"/>
<dbReference type="EMDB" id="EMD-28801"/>
<dbReference type="EMDB" id="EMD-28806"/>
<dbReference type="EMDB" id="EMD-28808"/>
<dbReference type="SMR" id="P0C0V0"/>
<dbReference type="BioGRID" id="4260994">
    <property type="interactions" value="970"/>
</dbReference>
<dbReference type="DIP" id="DIP-46256N"/>
<dbReference type="FunCoup" id="P0C0V0">
    <property type="interactions" value="835"/>
</dbReference>
<dbReference type="IntAct" id="P0C0V0">
    <property type="interactions" value="20"/>
</dbReference>
<dbReference type="MINT" id="P0C0V0"/>
<dbReference type="STRING" id="511145.b0161"/>
<dbReference type="ChEMBL" id="CHEMBL5291593"/>
<dbReference type="MEROPS" id="S01.273"/>
<dbReference type="MoonProt" id="P0C0V0"/>
<dbReference type="jPOST" id="P0C0V0"/>
<dbReference type="PaxDb" id="511145-b0161"/>
<dbReference type="EnsemblBacteria" id="AAC73272">
    <property type="protein sequence ID" value="AAC73272"/>
    <property type="gene ID" value="b0161"/>
</dbReference>
<dbReference type="GeneID" id="93777263"/>
<dbReference type="GeneID" id="947139"/>
<dbReference type="KEGG" id="ecj:JW0157"/>
<dbReference type="KEGG" id="eco:b0161"/>
<dbReference type="KEGG" id="ecoc:C3026_00735"/>
<dbReference type="PATRIC" id="fig|1411691.4.peg.2119"/>
<dbReference type="EchoBASE" id="EB0458"/>
<dbReference type="eggNOG" id="COG0265">
    <property type="taxonomic scope" value="Bacteria"/>
</dbReference>
<dbReference type="HOGENOM" id="CLU_020120_1_1_6"/>
<dbReference type="InParanoid" id="P0C0V0"/>
<dbReference type="OMA" id="RALFQIQ"/>
<dbReference type="OrthoDB" id="9758917at2"/>
<dbReference type="PhylomeDB" id="P0C0V0"/>
<dbReference type="BioCyc" id="EcoCyc:EG10463-MONOMER"/>
<dbReference type="BioCyc" id="MetaCyc:EG10463-MONOMER"/>
<dbReference type="BRENDA" id="3.4.21.107">
    <property type="organism ID" value="2026"/>
</dbReference>
<dbReference type="EvolutionaryTrace" id="P0C0V0"/>
<dbReference type="PRO" id="PR:P0C0V0"/>
<dbReference type="Proteomes" id="UP000000625">
    <property type="component" value="Chromosome"/>
</dbReference>
<dbReference type="GO" id="GO:0030288">
    <property type="term" value="C:outer membrane-bounded periplasmic space"/>
    <property type="evidence" value="ECO:0000314"/>
    <property type="project" value="EcoCyc"/>
</dbReference>
<dbReference type="GO" id="GO:0042597">
    <property type="term" value="C:periplasmic space"/>
    <property type="evidence" value="ECO:0000318"/>
    <property type="project" value="GO_Central"/>
</dbReference>
<dbReference type="GO" id="GO:0005886">
    <property type="term" value="C:plasma membrane"/>
    <property type="evidence" value="ECO:0000314"/>
    <property type="project" value="EcoCyc"/>
</dbReference>
<dbReference type="GO" id="GO:0042802">
    <property type="term" value="F:identical protein binding"/>
    <property type="evidence" value="ECO:0000314"/>
    <property type="project" value="EcoCyc"/>
</dbReference>
<dbReference type="GO" id="GO:0008233">
    <property type="term" value="F:peptidase activity"/>
    <property type="evidence" value="ECO:0000314"/>
    <property type="project" value="EcoCyc"/>
</dbReference>
<dbReference type="GO" id="GO:0004252">
    <property type="term" value="F:serine-type endopeptidase activity"/>
    <property type="evidence" value="ECO:0000314"/>
    <property type="project" value="EcoCyc"/>
</dbReference>
<dbReference type="GO" id="GO:0008236">
    <property type="term" value="F:serine-type peptidase activity"/>
    <property type="evidence" value="ECO:0000315"/>
    <property type="project" value="EcoCyc"/>
</dbReference>
<dbReference type="GO" id="GO:0061077">
    <property type="term" value="P:chaperone-mediated protein folding"/>
    <property type="evidence" value="ECO:0000314"/>
    <property type="project" value="EcoCyc"/>
</dbReference>
<dbReference type="GO" id="GO:0006457">
    <property type="term" value="P:protein folding"/>
    <property type="evidence" value="ECO:0000315"/>
    <property type="project" value="EcoliWiki"/>
</dbReference>
<dbReference type="GO" id="GO:0006515">
    <property type="term" value="P:protein quality control for misfolded or incompletely synthesized proteins"/>
    <property type="evidence" value="ECO:0000314"/>
    <property type="project" value="EcoCyc"/>
</dbReference>
<dbReference type="GO" id="GO:0006508">
    <property type="term" value="P:proteolysis"/>
    <property type="evidence" value="ECO:0000314"/>
    <property type="project" value="EcoCyc"/>
</dbReference>
<dbReference type="GO" id="GO:0009408">
    <property type="term" value="P:response to heat"/>
    <property type="evidence" value="ECO:0000315"/>
    <property type="project" value="EcoCyc"/>
</dbReference>
<dbReference type="GO" id="GO:0006979">
    <property type="term" value="P:response to oxidative stress"/>
    <property type="evidence" value="ECO:0000270"/>
    <property type="project" value="EcoliWiki"/>
</dbReference>
<dbReference type="GO" id="GO:0009266">
    <property type="term" value="P:response to temperature stimulus"/>
    <property type="evidence" value="ECO:0000270"/>
    <property type="project" value="EcoliWiki"/>
</dbReference>
<dbReference type="CDD" id="cd10839">
    <property type="entry name" value="cpPDZ1_DegP-like"/>
    <property type="match status" value="1"/>
</dbReference>
<dbReference type="CDD" id="cd23084">
    <property type="entry name" value="cpPDZ2_DegP-like"/>
    <property type="match status" value="1"/>
</dbReference>
<dbReference type="FunFam" id="2.30.42.10:FF:000037">
    <property type="entry name" value="Periplasmic serine endoprotease DegP-like"/>
    <property type="match status" value="1"/>
</dbReference>
<dbReference type="FunFam" id="2.30.42.10:FF:000050">
    <property type="entry name" value="Periplasmic serine endoprotease DegP-like"/>
    <property type="match status" value="1"/>
</dbReference>
<dbReference type="FunFam" id="2.40.10.120:FF:000001">
    <property type="entry name" value="Periplasmic serine endoprotease DegP-like"/>
    <property type="match status" value="1"/>
</dbReference>
<dbReference type="FunFam" id="2.40.10.10:FF:000001">
    <property type="entry name" value="Periplasmic serine protease DegS"/>
    <property type="match status" value="1"/>
</dbReference>
<dbReference type="Gene3D" id="2.30.42.10">
    <property type="match status" value="2"/>
</dbReference>
<dbReference type="Gene3D" id="2.40.10.120">
    <property type="match status" value="1"/>
</dbReference>
<dbReference type="InterPro" id="IPR001478">
    <property type="entry name" value="PDZ"/>
</dbReference>
<dbReference type="InterPro" id="IPR036034">
    <property type="entry name" value="PDZ_sf"/>
</dbReference>
<dbReference type="InterPro" id="IPR011782">
    <property type="entry name" value="Pept_S1C_Do"/>
</dbReference>
<dbReference type="InterPro" id="IPR009003">
    <property type="entry name" value="Peptidase_S1_PA"/>
</dbReference>
<dbReference type="InterPro" id="IPR001940">
    <property type="entry name" value="Peptidase_S1C"/>
</dbReference>
<dbReference type="NCBIfam" id="TIGR02037">
    <property type="entry name" value="degP_htrA_DO"/>
    <property type="match status" value="1"/>
</dbReference>
<dbReference type="NCBIfam" id="NF008189">
    <property type="entry name" value="PRK10942.1"/>
    <property type="match status" value="1"/>
</dbReference>
<dbReference type="PANTHER" id="PTHR22939">
    <property type="entry name" value="SERINE PROTEASE FAMILY S1C HTRA-RELATED"/>
    <property type="match status" value="1"/>
</dbReference>
<dbReference type="PANTHER" id="PTHR22939:SF129">
    <property type="entry name" value="SERINE PROTEASE HTRA2, MITOCHONDRIAL"/>
    <property type="match status" value="1"/>
</dbReference>
<dbReference type="Pfam" id="PF00595">
    <property type="entry name" value="PDZ"/>
    <property type="match status" value="2"/>
</dbReference>
<dbReference type="Pfam" id="PF13365">
    <property type="entry name" value="Trypsin_2"/>
    <property type="match status" value="1"/>
</dbReference>
<dbReference type="PRINTS" id="PR00834">
    <property type="entry name" value="PROTEASES2C"/>
</dbReference>
<dbReference type="SMART" id="SM00228">
    <property type="entry name" value="PDZ"/>
    <property type="match status" value="2"/>
</dbReference>
<dbReference type="SUPFAM" id="SSF50156">
    <property type="entry name" value="PDZ domain-like"/>
    <property type="match status" value="2"/>
</dbReference>
<dbReference type="SUPFAM" id="SSF50494">
    <property type="entry name" value="Trypsin-like serine proteases"/>
    <property type="match status" value="1"/>
</dbReference>
<dbReference type="PROSITE" id="PS50106">
    <property type="entry name" value="PDZ"/>
    <property type="match status" value="2"/>
</dbReference>
<protein>
    <recommendedName>
        <fullName>Periplasmic serine endoprotease DegP</fullName>
        <ecNumber evidence="21">3.4.21.107</ecNumber>
    </recommendedName>
    <alternativeName>
        <fullName>Heat shock protein DegP</fullName>
    </alternativeName>
    <alternativeName>
        <fullName>Protease Do</fullName>
    </alternativeName>
</protein>
<reference key="1">
    <citation type="journal article" date="1988" name="Nucleic Acids Res.">
        <title>Sequence analysis and regulation of the htrA gene of Escherichia coli: a sigma 32-independent mechanism of heat-inducible transcription.</title>
        <authorList>
            <person name="Lipinska B."/>
            <person name="Sharma S."/>
            <person name="Georgopoulos C."/>
        </authorList>
    </citation>
    <scope>NUCLEOTIDE SEQUENCE [GENOMIC DNA]</scope>
    <scope>INDUCTION</scope>
    <source>
        <strain>K12</strain>
    </source>
</reference>
<reference key="2">
    <citation type="journal article" date="1994" name="Nucleic Acids Res.">
        <title>Systematic sequencing of the Escherichia coli genome: analysis of the 2.4-4.1 min (110,917-193,643 bp) region.</title>
        <authorList>
            <person name="Fujita N."/>
            <person name="Mori H."/>
            <person name="Yura T."/>
            <person name="Ishihama A."/>
        </authorList>
    </citation>
    <scope>NUCLEOTIDE SEQUENCE [LARGE SCALE GENOMIC DNA]</scope>
    <source>
        <strain>K12 / W3110 / ATCC 27325 / DSM 5911</strain>
    </source>
</reference>
<reference key="3">
    <citation type="submission" date="1997-01" db="EMBL/GenBank/DDBJ databases">
        <title>Sequence of minutes 4-25 of Escherichia coli.</title>
        <authorList>
            <person name="Chung E."/>
            <person name="Allen E."/>
            <person name="Araujo R."/>
            <person name="Aparicio A.M."/>
            <person name="Davis K."/>
            <person name="Duncan M."/>
            <person name="Federspiel N."/>
            <person name="Hyman R."/>
            <person name="Kalman S."/>
            <person name="Komp C."/>
            <person name="Kurdi O."/>
            <person name="Lew H."/>
            <person name="Lin D."/>
            <person name="Namath A."/>
            <person name="Oefner P."/>
            <person name="Roberts D."/>
            <person name="Schramm S."/>
            <person name="Davis R.W."/>
        </authorList>
    </citation>
    <scope>NUCLEOTIDE SEQUENCE [LARGE SCALE GENOMIC DNA]</scope>
    <source>
        <strain>K12 / MG1655 / ATCC 47076</strain>
    </source>
</reference>
<reference key="4">
    <citation type="journal article" date="1997" name="Science">
        <title>The complete genome sequence of Escherichia coli K-12.</title>
        <authorList>
            <person name="Blattner F.R."/>
            <person name="Plunkett G. III"/>
            <person name="Bloch C.A."/>
            <person name="Perna N.T."/>
            <person name="Burland V."/>
            <person name="Riley M."/>
            <person name="Collado-Vides J."/>
            <person name="Glasner J.D."/>
            <person name="Rode C.K."/>
            <person name="Mayhew G.F."/>
            <person name="Gregor J."/>
            <person name="Davis N.W."/>
            <person name="Kirkpatrick H.A."/>
            <person name="Goeden M.A."/>
            <person name="Rose D.J."/>
            <person name="Mau B."/>
            <person name="Shao Y."/>
        </authorList>
    </citation>
    <scope>NUCLEOTIDE SEQUENCE [LARGE SCALE GENOMIC DNA]</scope>
    <source>
        <strain>K12 / MG1655 / ATCC 47076</strain>
    </source>
</reference>
<reference key="5">
    <citation type="journal article" date="2006" name="Mol. Syst. Biol.">
        <title>Highly accurate genome sequences of Escherichia coli K-12 strains MG1655 and W3110.</title>
        <authorList>
            <person name="Hayashi K."/>
            <person name="Morooka N."/>
            <person name="Yamamoto Y."/>
            <person name="Fujita K."/>
            <person name="Isono K."/>
            <person name="Choi S."/>
            <person name="Ohtsubo E."/>
            <person name="Baba T."/>
            <person name="Wanner B.L."/>
            <person name="Mori H."/>
            <person name="Horiuchi T."/>
        </authorList>
    </citation>
    <scope>NUCLEOTIDE SEQUENCE [LARGE SCALE GENOMIC DNA]</scope>
    <source>
        <strain>K12 / W3110 / ATCC 27325 / DSM 5911</strain>
    </source>
</reference>
<reference key="6">
    <citation type="journal article" date="1990" name="Gene">
        <title>Primary structure of the deoxyguanosine triphosphate triphosphohydrolase-encoding gene (dgt) of Escherichia coli.</title>
        <authorList>
            <person name="Quirk S."/>
            <person name="Bhatnagar S.K."/>
            <person name="Bessman M.J."/>
        </authorList>
    </citation>
    <scope>NUCLEOTIDE SEQUENCE [GENOMIC DNA] OF 1-50</scope>
    <source>
        <strain>K12</strain>
    </source>
</reference>
<reference key="7">
    <citation type="journal article" date="1990" name="Proc. Natl. Acad. Sci. U.S.A.">
        <title>Structure and regulation of the gene for dGTP triphosphohydrolase from Escherichia coli.</title>
        <authorList>
            <person name="Wurgler S.M."/>
            <person name="Richardson C.C."/>
        </authorList>
    </citation>
    <scope>NUCLEOTIDE SEQUENCE [GENOMIC DNA] OF 1-16</scope>
</reference>
<reference key="8">
    <citation type="journal article" date="1990" name="J. Bacteriol.">
        <title>The HtrA (DegP) protein, essential for Escherichia coli survival at high temperatures, is an endopeptidase.</title>
        <authorList>
            <person name="Lipinska B."/>
            <person name="Zylicz M."/>
            <person name="Georgopoulos C."/>
        </authorList>
    </citation>
    <scope>PROTEIN SEQUENCE OF 27-39</scope>
    <scope>FUNCTION AS A SERINE PROTEASE</scope>
    <scope>ACTIVITY REGULATION</scope>
    <source>
        <strain>K12</strain>
    </source>
</reference>
<reference key="9">
    <citation type="journal article" date="1998" name="J. Mol. Biol.">
        <title>Protein identification with N and C-terminal sequence tags in proteome projects.</title>
        <authorList>
            <person name="Wilkins M.R."/>
            <person name="Gasteiger E."/>
            <person name="Tonella L."/>
            <person name="Ou K."/>
            <person name="Tyler M."/>
            <person name="Sanchez J.-C."/>
            <person name="Gooley A.A."/>
            <person name="Walsh B.J."/>
            <person name="Bairoch A."/>
            <person name="Appel R.D."/>
            <person name="Williams K.L."/>
            <person name="Hochstrasser D.F."/>
        </authorList>
    </citation>
    <scope>PROTEIN SEQUENCE OF 27-30</scope>
    <source>
        <strain>K12 / W3110 / ATCC 27325 / DSM 5911</strain>
    </source>
</reference>
<reference key="10">
    <citation type="journal article" date="1991" name="Biochem. Biophys. Res. Commun.">
        <title>Protease Do is essential for survival of Escherichia coli at high temperatures: its identity with the htrA gene product.</title>
        <authorList>
            <person name="Seol J.H."/>
            <person name="Woo S.K."/>
            <person name="Jung E.M."/>
            <person name="Yoo S.J."/>
            <person name="Lee C.S."/>
            <person name="Kim K.J."/>
            <person name="Tanaka K."/>
            <person name="Ichihara A."/>
            <person name="Ha D.B."/>
            <person name="Chung C.H."/>
        </authorList>
    </citation>
    <scope>IDENTITY OF HTRA AND PROTEASE DO</scope>
</reference>
<reference key="11">
    <citation type="journal article" date="1995" name="Gene">
        <title>Site-directed mutagenesis of the HtrA (DegP) serine protease, whose proteolytic activity is indispensable for Escherichia coli survival at elevated temperatures (above 42 degrees Celsius).</title>
        <authorList>
            <person name="Skorko-Glonek J."/>
            <person name="Wawrzynow A."/>
            <person name="Krzewski K."/>
            <person name="Kurpierz K."/>
            <person name="Lipinska B."/>
        </authorList>
    </citation>
    <scope>FUNCTION</scope>
    <scope>MUTAGENESIS OF HIS-131 AND SER-236</scope>
</reference>
<reference key="12">
    <citation type="journal article" date="1995" name="Genes Dev.">
        <title>The Cpx two-component signal transduction pathway of Escherichia coli regulates transcription of the gene specifying the stress-inducible periplasmic protease, DegP.</title>
        <authorList>
            <person name="Danese P.N."/>
            <person name="Snyder W.B."/>
            <person name="Cosma C.L."/>
            <person name="Davis L.J."/>
            <person name="Silhavy T.J."/>
        </authorList>
    </citation>
    <scope>INDUCTION</scope>
    <source>
        <strain>K12 / MC4100</strain>
    </source>
</reference>
<reference key="13">
    <citation type="journal article" date="1995" name="J. Biol. Chem.">
        <title>Comparison of the structure of wild-type HtrA heat shock protease and mutant HtrA proteins. A Fourier transform infrared spectroscopic study.</title>
        <authorList>
            <person name="Skorko-Glonek J."/>
            <person name="Krzewski K."/>
            <person name="Lipinska B."/>
            <person name="Bertoli E."/>
            <person name="Tanfani F."/>
        </authorList>
    </citation>
    <scope>BIOPHYSICOCHEMICAL PROPERTIES</scope>
</reference>
<reference key="14">
    <citation type="journal article" date="1996" name="J. Bacteriol.">
        <title>The DegP and DegQ periplasmic endoproteases of Escherichia coli: specificity for cleavage sites and substrate conformation.</title>
        <authorList>
            <person name="Kolmar H."/>
            <person name="Waller P.R."/>
            <person name="Sauer R.T."/>
        </authorList>
    </citation>
    <scope>FUNCTION AS A SERINE PROTEASE</scope>
    <scope>CATALYTIC ACTIVITY</scope>
    <scope>SUBSTRATE SPECIFICITY</scope>
    <scope>SUBUNIT</scope>
</reference>
<reference key="15">
    <citation type="journal article" date="1997" name="J. Biol. Chem.">
        <title>HtrA heat shock protease interacts with phospholipid membranes and undergoes conformational changes.</title>
        <authorList>
            <person name="Skorko-Glonek J."/>
            <person name="Lipinska B."/>
            <person name="Krzewski K."/>
            <person name="Zolese G."/>
            <person name="Bertoli E."/>
            <person name="Tanfani F."/>
        </authorList>
    </citation>
    <scope>SUBCELLULAR LOCATION</scope>
</reference>
<reference key="16">
    <citation type="journal article" date="1997" name="EMBO J.">
        <title>The chaperone-assisted membrane release and folding pathway is sensed by two signal transduction systems.</title>
        <authorList>
            <person name="Jones C.H."/>
            <person name="Danese P.N."/>
            <person name="Pinkner J.S."/>
            <person name="Silhavy T.J."/>
            <person name="Hultgren S.J."/>
        </authorList>
    </citation>
    <scope>INDUCTION</scope>
</reference>
<reference key="17">
    <citation type="journal article" date="1999" name="Cell">
        <title>A temperature-dependent switch from chaperone to protease in a widely conserved heat shock protein.</title>
        <authorList>
            <person name="Spiess C."/>
            <person name="Beil A."/>
            <person name="Ehrmann M."/>
        </authorList>
    </citation>
    <scope>FUNCTION AS A CHAPERONE AND AS A SERINE PROTEASE</scope>
</reference>
<reference key="18">
    <citation type="journal article" date="2002" name="J. Bacteriol.">
        <title>Escherichia coli DegP protease cleaves between paired hydrophobic residues in a natural substrate: the PapA pilin.</title>
        <authorList>
            <person name="Jones C.H."/>
            <person name="Dexter P."/>
            <person name="Evans A.K."/>
            <person name="Liu C."/>
            <person name="Hultgren S.J."/>
            <person name="Hruby D.E."/>
        </authorList>
    </citation>
    <scope>SUBSTRATE SPECIFICITY</scope>
</reference>
<reference key="19">
    <citation type="journal article" date="2003" name="Biochim. Biophys. Acta">
        <title>The N-terminal region of HtrA heat shock protease from Escherichia coli is essential for stabilization of HtrA primary structure and maintaining of its oligomeric structure.</title>
        <authorList>
            <person name="Skorko-Glonek J."/>
            <person name="Zurawa D."/>
            <person name="Tanfani F."/>
            <person name="Scire A."/>
            <person name="Wawrzynow A."/>
            <person name="Narkiewicz J."/>
            <person name="Bertoli E."/>
            <person name="Lipinska B."/>
        </authorList>
    </citation>
    <scope>DISULFIDE BOND</scope>
    <source>
        <strain>K12 / W3110 / ATCC 27325 / DSM 5911</strain>
    </source>
</reference>
<reference key="20">
    <citation type="journal article" date="2005" name="J. Bacteriol.">
        <title>Cpx signal transduction is influenced by a conserved N-terminal domain in the novel inhibitor CpxP and the periplasmic protease DegP.</title>
        <authorList>
            <person name="Buelow D.R."/>
            <person name="Raivio T.L."/>
        </authorList>
    </citation>
    <scope>DISRUPTION PHENOTYPE</scope>
    <source>
        <strain>K12 / MC4100</strain>
    </source>
</reference>
<reference key="21">
    <citation type="journal article" date="2005" name="Proc. Natl. Acad. Sci. U.S.A.">
        <title>The extracytoplasmic adaptor protein CpxP is degraded with substrate by DegP.</title>
        <authorList>
            <person name="Isaac D.D."/>
            <person name="Pinkner J.S."/>
            <person name="Hultgren S.J."/>
            <person name="Silhavy T.J."/>
        </authorList>
    </citation>
    <scope>FUNCTION</scope>
    <scope>DISRUPTION PHENOTYPE</scope>
    <source>
        <strain>K12 / MC4100</strain>
    </source>
</reference>
<reference key="22">
    <citation type="journal article" date="2008" name="Proc. Natl. Acad. Sci. U.S.A.">
        <title>Interplay of PDZ and protease domain of DegP ensures efficient elimination of misfolded proteins.</title>
        <authorList>
            <person name="Krojer T."/>
            <person name="Pangerl K."/>
            <person name="Kurt J."/>
            <person name="Sawa J."/>
            <person name="Stingl C."/>
            <person name="Mechtler K."/>
            <person name="Huber R."/>
            <person name="Ehrmann M."/>
            <person name="Clausen T."/>
        </authorList>
    </citation>
    <scope>FUNCTION IN PREVENTION OF PROTEIN MISFOLDING</scope>
</reference>
<reference key="23">
    <citation type="journal article" date="2008" name="Proc. Natl. Acad. Sci. U.S.A.">
        <title>Activation of DegP chaperone-protease via formation of large cage-like oligomers upon binding to substrate proteins.</title>
        <authorList>
            <person name="Jiang J."/>
            <person name="Zhang X."/>
            <person name="Chen Y."/>
            <person name="Wu Y."/>
            <person name="Zhou Z.H."/>
            <person name="Chang Z."/>
            <person name="Sui S.F."/>
        </authorList>
    </citation>
    <scope>SUBUNIT</scope>
</reference>
<reference key="24">
    <citation type="journal article" date="2009" name="Mol. Cell">
        <title>Hydroxyurea induces hydroxyl radical-mediated cell death in Escherichia coli.</title>
        <authorList>
            <person name="Davies B.W."/>
            <person name="Kohanski M.A."/>
            <person name="Simmons L.A."/>
            <person name="Winkler J.A."/>
            <person name="Collins J.J."/>
            <person name="Walker G.C."/>
        </authorList>
    </citation>
    <scope>ROLE IN HYDROXYUREA RESISTANCE</scope>
    <scope>DISRUPTION PHENOTYPE</scope>
    <source>
        <strain>K12 / MC4100 / ATCC 35695 / DSM 6574</strain>
    </source>
</reference>
<reference key="25">
    <citation type="journal article" date="2010" name="Arch. Biochem. Biophys.">
        <title>The role of the L2 loop in the regulation and maintaining the proteolytic activity of HtrA (DegP) protein from Escherichia coli.</title>
        <authorList>
            <person name="Sobiecka-Szkatula A."/>
            <person name="Gieldon A."/>
            <person name="Scire A."/>
            <person name="Tanfani F."/>
            <person name="Figaj D."/>
            <person name="Koper T."/>
            <person name="Ciarkowski J."/>
            <person name="Lipinska B."/>
            <person name="Skorko-Glonek J."/>
        </authorList>
    </citation>
    <scope>MUTAGENESIS OF ILE-254; LEU-255; ASP-258; ASN-261; ILE-262 AND ILE-264</scope>
</reference>
<reference key="26">
    <citation type="journal article" date="2011" name="PLoS ONE">
        <title>Factors defining the functional oligomeric state of Escherichia coli DegP protease.</title>
        <authorList>
            <person name="Iwanczyk J."/>
            <person name="Leong V."/>
            <person name="Ortega J."/>
        </authorList>
    </citation>
    <scope>OLIGOMERIZATION</scope>
    <scope>SUBSTRATE SPECIFICITY</scope>
    <scope>SUBUNIT</scope>
</reference>
<reference key="27">
    <citation type="journal article" date="2002" name="Nature">
        <title>Crystal structure of DegP (HtrA) reveals a new protease-chaperone machine.</title>
        <authorList>
            <person name="Krojer T."/>
            <person name="Garrido-Franco M."/>
            <person name="Huber R."/>
            <person name="Ehrmann M."/>
            <person name="Clausen T."/>
        </authorList>
    </citation>
    <scope>X-RAY CRYSTALLOGRAPHY (2.8 ANGSTROMS) OF 27-474 OF MUTANT SER-236</scope>
    <scope>SUBUNIT</scope>
</reference>
<reference key="28">
    <citation type="journal article" date="2003" name="J. Bacteriol.">
        <title>Roles of DegP in prevention of protein misfolding in the periplasm upon overexpression of penicillin acylase in Escherichia coli.</title>
        <authorList>
            <person name="Pan K.L."/>
            <person name="Hsiao H.C."/>
            <person name="Weng C.L."/>
            <person name="Wu M.S."/>
            <person name="Chou C.P."/>
        </authorList>
    </citation>
    <scope>FUNCTION IN PREVENTION OF PROTEIN MISFOLDING</scope>
    <scope>MUTAGENESIS OF SER-236</scope>
</reference>
<reference key="29">
    <citation type="journal article" date="2008" name="Nature">
        <title>Structural basis for the regulated protease and chaperone function of DegP.</title>
        <authorList>
            <person name="Krojer T."/>
            <person name="Sawa J."/>
            <person name="Schafer E."/>
            <person name="Saibil H.R."/>
            <person name="Ehrmann M."/>
            <person name="Clausen T."/>
        </authorList>
    </citation>
    <scope>STRUCTURE BY ELECTRON MICROSCOPY (28.0 ANGSTROMS) OF 27-474 OF MUTANT SER-236 IN COMPLEX WITH ANALOG SUBSTRATE</scope>
    <scope>FUNCTION AS A CHAPERONE AND AS A SERINE PROTEASE</scope>
    <scope>OLIGOMERIZATION</scope>
    <scope>SUBUNIT</scope>
</reference>
<reference key="30">
    <citation type="journal article" date="2010" name="Nat. Struct. Mol. Biol.">
        <title>HtrA proteases have a conserved activation mechanism that can be triggered by distinct molecular cues.</title>
        <authorList>
            <person name="Krojer T."/>
            <person name="Sawa J."/>
            <person name="Huber R."/>
            <person name="Clausen T."/>
        </authorList>
    </citation>
    <scope>X-RAY CRYSTALLOGRAPHY (3.1 ANGSTROMS) OF 27-474 IN COMPLEX WITH ANALOG SUBSTRATE</scope>
    <scope>OLIGOMERIZATION</scope>
    <scope>SUBUNIT</scope>
    <scope>ACTIVE SITE</scope>
</reference>
<reference key="31">
    <citation type="journal article" date="2011" name="Cell">
        <title>Covalent linkage of distinct substrate degrons controls assembly and disassembly of DegP proteolytic cages.</title>
        <authorList>
            <person name="Kim S."/>
            <person name="Grant R.A."/>
            <person name="Sauer R.T."/>
        </authorList>
    </citation>
    <scope>X-RAY CRYSTALLOGRAPHY (3.0 ANGSTROMS) OF 27-474 IN COMPLEX WITH ANALOG SUBSTRATE</scope>
    <scope>OLIGOMERIZATION</scope>
    <scope>SUBUNIT</scope>
</reference>